<organism>
    <name type="scientific">Chlamydia caviae (strain ATCC VR-813 / DSM 19441 / 03DC25 / GPIC)</name>
    <name type="common">Chlamydophila caviae</name>
    <dbReference type="NCBI Taxonomy" id="227941"/>
    <lineage>
        <taxon>Bacteria</taxon>
        <taxon>Pseudomonadati</taxon>
        <taxon>Chlamydiota</taxon>
        <taxon>Chlamydiia</taxon>
        <taxon>Chlamydiales</taxon>
        <taxon>Chlamydiaceae</taxon>
        <taxon>Chlamydia/Chlamydophila group</taxon>
        <taxon>Chlamydia</taxon>
    </lineage>
</organism>
<feature type="chain" id="PRO_0000129802" description="Small ribosomal subunit protein uS19">
    <location>
        <begin position="1"/>
        <end position="88"/>
    </location>
</feature>
<protein>
    <recommendedName>
        <fullName evidence="1">Small ribosomal subunit protein uS19</fullName>
    </recommendedName>
    <alternativeName>
        <fullName evidence="2">30S ribosomal protein S19</fullName>
    </alternativeName>
</protein>
<reference key="1">
    <citation type="journal article" date="2003" name="Nucleic Acids Res.">
        <title>Genome sequence of Chlamydophila caviae (Chlamydia psittaci GPIC): examining the role of niche-specific genes in the evolution of the Chlamydiaceae.</title>
        <authorList>
            <person name="Read T.D."/>
            <person name="Myers G.S.A."/>
            <person name="Brunham R.C."/>
            <person name="Nelson W.C."/>
            <person name="Paulsen I.T."/>
            <person name="Heidelberg J.F."/>
            <person name="Holtzapple E.K."/>
            <person name="Khouri H.M."/>
            <person name="Federova N.B."/>
            <person name="Carty H.A."/>
            <person name="Umayam L.A."/>
            <person name="Haft D.H."/>
            <person name="Peterson J.D."/>
            <person name="Beanan M.J."/>
            <person name="White O."/>
            <person name="Salzberg S.L."/>
            <person name="Hsia R.-C."/>
            <person name="McClarty G."/>
            <person name="Rank R.G."/>
            <person name="Bavoil P.M."/>
            <person name="Fraser C.M."/>
        </authorList>
    </citation>
    <scope>NUCLEOTIDE SEQUENCE [LARGE SCALE GENOMIC DNA]</scope>
    <source>
        <strain>ATCC VR-813 / DSM 19441 / 03DC25 / GPIC</strain>
    </source>
</reference>
<sequence>MSRSLRKGPFVDHHLIKKVRAMNLLEKKSPIKTWSRRSMITPEMIGHTFEVHNGKKFLTVFVSETMVGHKLGEFSPTRIFKSHPVKKG</sequence>
<comment type="function">
    <text evidence="1">Protein S19 forms a complex with S13 that binds strongly to the 16S ribosomal RNA.</text>
</comment>
<comment type="similarity">
    <text evidence="1">Belongs to the universal ribosomal protein uS19 family.</text>
</comment>
<keyword id="KW-0687">Ribonucleoprotein</keyword>
<keyword id="KW-0689">Ribosomal protein</keyword>
<keyword id="KW-0694">RNA-binding</keyword>
<keyword id="KW-0699">rRNA-binding</keyword>
<accession>Q824P7</accession>
<proteinExistence type="inferred from homology"/>
<evidence type="ECO:0000255" key="1">
    <source>
        <dbReference type="HAMAP-Rule" id="MF_00531"/>
    </source>
</evidence>
<evidence type="ECO:0000305" key="2"/>
<gene>
    <name evidence="1" type="primary">rpsS</name>
    <name type="ordered locus">CCA_00097</name>
</gene>
<name>RS19_CHLCV</name>
<dbReference type="EMBL" id="AE015925">
    <property type="protein sequence ID" value="AAP04849.1"/>
    <property type="molecule type" value="Genomic_DNA"/>
</dbReference>
<dbReference type="RefSeq" id="WP_011006070.1">
    <property type="nucleotide sequence ID" value="NC_003361.3"/>
</dbReference>
<dbReference type="SMR" id="Q824P7"/>
<dbReference type="STRING" id="227941.CCA_00097"/>
<dbReference type="KEGG" id="cca:CCA_00097"/>
<dbReference type="eggNOG" id="COG0185">
    <property type="taxonomic scope" value="Bacteria"/>
</dbReference>
<dbReference type="HOGENOM" id="CLU_144911_0_1_0"/>
<dbReference type="OrthoDB" id="9797833at2"/>
<dbReference type="Proteomes" id="UP000002193">
    <property type="component" value="Chromosome"/>
</dbReference>
<dbReference type="GO" id="GO:0005737">
    <property type="term" value="C:cytoplasm"/>
    <property type="evidence" value="ECO:0007669"/>
    <property type="project" value="UniProtKB-ARBA"/>
</dbReference>
<dbReference type="GO" id="GO:0015935">
    <property type="term" value="C:small ribosomal subunit"/>
    <property type="evidence" value="ECO:0007669"/>
    <property type="project" value="InterPro"/>
</dbReference>
<dbReference type="GO" id="GO:0019843">
    <property type="term" value="F:rRNA binding"/>
    <property type="evidence" value="ECO:0007669"/>
    <property type="project" value="UniProtKB-UniRule"/>
</dbReference>
<dbReference type="GO" id="GO:0003735">
    <property type="term" value="F:structural constituent of ribosome"/>
    <property type="evidence" value="ECO:0007669"/>
    <property type="project" value="InterPro"/>
</dbReference>
<dbReference type="GO" id="GO:0000028">
    <property type="term" value="P:ribosomal small subunit assembly"/>
    <property type="evidence" value="ECO:0007669"/>
    <property type="project" value="TreeGrafter"/>
</dbReference>
<dbReference type="GO" id="GO:0006412">
    <property type="term" value="P:translation"/>
    <property type="evidence" value="ECO:0007669"/>
    <property type="project" value="UniProtKB-UniRule"/>
</dbReference>
<dbReference type="FunFam" id="3.30.860.10:FF:000001">
    <property type="entry name" value="30S ribosomal protein S19"/>
    <property type="match status" value="1"/>
</dbReference>
<dbReference type="Gene3D" id="3.30.860.10">
    <property type="entry name" value="30s Ribosomal Protein S19, Chain A"/>
    <property type="match status" value="1"/>
</dbReference>
<dbReference type="HAMAP" id="MF_00531">
    <property type="entry name" value="Ribosomal_uS19"/>
    <property type="match status" value="1"/>
</dbReference>
<dbReference type="InterPro" id="IPR002222">
    <property type="entry name" value="Ribosomal_uS19"/>
</dbReference>
<dbReference type="InterPro" id="IPR005732">
    <property type="entry name" value="Ribosomal_uS19_bac-type"/>
</dbReference>
<dbReference type="InterPro" id="IPR020934">
    <property type="entry name" value="Ribosomal_uS19_CS"/>
</dbReference>
<dbReference type="InterPro" id="IPR023575">
    <property type="entry name" value="Ribosomal_uS19_SF"/>
</dbReference>
<dbReference type="NCBIfam" id="TIGR01050">
    <property type="entry name" value="rpsS_bact"/>
    <property type="match status" value="1"/>
</dbReference>
<dbReference type="PANTHER" id="PTHR11880">
    <property type="entry name" value="RIBOSOMAL PROTEIN S19P FAMILY MEMBER"/>
    <property type="match status" value="1"/>
</dbReference>
<dbReference type="PANTHER" id="PTHR11880:SF8">
    <property type="entry name" value="SMALL RIBOSOMAL SUBUNIT PROTEIN US19M"/>
    <property type="match status" value="1"/>
</dbReference>
<dbReference type="Pfam" id="PF00203">
    <property type="entry name" value="Ribosomal_S19"/>
    <property type="match status" value="1"/>
</dbReference>
<dbReference type="PIRSF" id="PIRSF002144">
    <property type="entry name" value="Ribosomal_S19"/>
    <property type="match status" value="1"/>
</dbReference>
<dbReference type="PRINTS" id="PR00975">
    <property type="entry name" value="RIBOSOMALS19"/>
</dbReference>
<dbReference type="SUPFAM" id="SSF54570">
    <property type="entry name" value="Ribosomal protein S19"/>
    <property type="match status" value="1"/>
</dbReference>
<dbReference type="PROSITE" id="PS00323">
    <property type="entry name" value="RIBOSOMAL_S19"/>
    <property type="match status" value="1"/>
</dbReference>